<dbReference type="EC" id="2.1.3.3" evidence="2"/>
<dbReference type="EMBL" id="CP000922">
    <property type="protein sequence ID" value="ACJ34505.1"/>
    <property type="molecule type" value="Genomic_DNA"/>
</dbReference>
<dbReference type="RefSeq" id="WP_012575683.1">
    <property type="nucleotide sequence ID" value="NC_011567.1"/>
</dbReference>
<dbReference type="SMR" id="B7GM02"/>
<dbReference type="STRING" id="491915.Aflv_2146"/>
<dbReference type="GeneID" id="7038399"/>
<dbReference type="KEGG" id="afl:Aflv_2146"/>
<dbReference type="eggNOG" id="COG0078">
    <property type="taxonomic scope" value="Bacteria"/>
</dbReference>
<dbReference type="HOGENOM" id="CLU_043846_3_2_9"/>
<dbReference type="UniPathway" id="UPA00068">
    <property type="reaction ID" value="UER00112"/>
</dbReference>
<dbReference type="Proteomes" id="UP000000742">
    <property type="component" value="Chromosome"/>
</dbReference>
<dbReference type="GO" id="GO:0005737">
    <property type="term" value="C:cytoplasm"/>
    <property type="evidence" value="ECO:0007669"/>
    <property type="project" value="UniProtKB-SubCell"/>
</dbReference>
<dbReference type="GO" id="GO:0016597">
    <property type="term" value="F:amino acid binding"/>
    <property type="evidence" value="ECO:0007669"/>
    <property type="project" value="InterPro"/>
</dbReference>
<dbReference type="GO" id="GO:0004585">
    <property type="term" value="F:ornithine carbamoyltransferase activity"/>
    <property type="evidence" value="ECO:0007669"/>
    <property type="project" value="UniProtKB-UniRule"/>
</dbReference>
<dbReference type="GO" id="GO:0042450">
    <property type="term" value="P:arginine biosynthetic process via ornithine"/>
    <property type="evidence" value="ECO:0007669"/>
    <property type="project" value="TreeGrafter"/>
</dbReference>
<dbReference type="GO" id="GO:0019240">
    <property type="term" value="P:citrulline biosynthetic process"/>
    <property type="evidence" value="ECO:0007669"/>
    <property type="project" value="TreeGrafter"/>
</dbReference>
<dbReference type="GO" id="GO:0006526">
    <property type="term" value="P:L-arginine biosynthetic process"/>
    <property type="evidence" value="ECO:0007669"/>
    <property type="project" value="UniProtKB-UniRule"/>
</dbReference>
<dbReference type="FunFam" id="3.40.50.1370:FF:000008">
    <property type="entry name" value="Ornithine carbamoyltransferase"/>
    <property type="match status" value="1"/>
</dbReference>
<dbReference type="FunFam" id="3.40.50.1370:FF:000016">
    <property type="entry name" value="Ornithine carbamoyltransferase"/>
    <property type="match status" value="1"/>
</dbReference>
<dbReference type="Gene3D" id="3.40.50.1370">
    <property type="entry name" value="Aspartate/ornithine carbamoyltransferase"/>
    <property type="match status" value="2"/>
</dbReference>
<dbReference type="HAMAP" id="MF_01109">
    <property type="entry name" value="OTCase"/>
    <property type="match status" value="1"/>
</dbReference>
<dbReference type="InterPro" id="IPR006132">
    <property type="entry name" value="Asp/Orn_carbamoyltranf_P-bd"/>
</dbReference>
<dbReference type="InterPro" id="IPR006130">
    <property type="entry name" value="Asp/Orn_carbamoylTrfase"/>
</dbReference>
<dbReference type="InterPro" id="IPR036901">
    <property type="entry name" value="Asp/Orn_carbamoylTrfase_sf"/>
</dbReference>
<dbReference type="InterPro" id="IPR006131">
    <property type="entry name" value="Asp_carbamoyltransf_Asp/Orn-bd"/>
</dbReference>
<dbReference type="InterPro" id="IPR002292">
    <property type="entry name" value="Orn/put_carbamltrans"/>
</dbReference>
<dbReference type="InterPro" id="IPR024904">
    <property type="entry name" value="OTCase_ArgI"/>
</dbReference>
<dbReference type="NCBIfam" id="TIGR00658">
    <property type="entry name" value="orni_carb_tr"/>
    <property type="match status" value="1"/>
</dbReference>
<dbReference type="NCBIfam" id="NF001986">
    <property type="entry name" value="PRK00779.1"/>
    <property type="match status" value="1"/>
</dbReference>
<dbReference type="PANTHER" id="PTHR45753">
    <property type="entry name" value="ORNITHINE CARBAMOYLTRANSFERASE, MITOCHONDRIAL"/>
    <property type="match status" value="1"/>
</dbReference>
<dbReference type="PANTHER" id="PTHR45753:SF3">
    <property type="entry name" value="ORNITHINE TRANSCARBAMYLASE, MITOCHONDRIAL"/>
    <property type="match status" value="1"/>
</dbReference>
<dbReference type="Pfam" id="PF00185">
    <property type="entry name" value="OTCace"/>
    <property type="match status" value="1"/>
</dbReference>
<dbReference type="Pfam" id="PF02729">
    <property type="entry name" value="OTCace_N"/>
    <property type="match status" value="1"/>
</dbReference>
<dbReference type="PRINTS" id="PR00100">
    <property type="entry name" value="AOTCASE"/>
</dbReference>
<dbReference type="PRINTS" id="PR00102">
    <property type="entry name" value="OTCASE"/>
</dbReference>
<dbReference type="SUPFAM" id="SSF53671">
    <property type="entry name" value="Aspartate/ornithine carbamoyltransferase"/>
    <property type="match status" value="1"/>
</dbReference>
<dbReference type="PROSITE" id="PS00097">
    <property type="entry name" value="CARBAMOYLTRANSFERASE"/>
    <property type="match status" value="1"/>
</dbReference>
<accession>B7GM02</accession>
<reference key="1">
    <citation type="journal article" date="2008" name="Genome Biol.">
        <title>Encapsulated in silica: genome, proteome and physiology of the thermophilic bacterium Anoxybacillus flavithermus WK1.</title>
        <authorList>
            <person name="Saw J.H."/>
            <person name="Mountain B.W."/>
            <person name="Feng L."/>
            <person name="Omelchenko M.V."/>
            <person name="Hou S."/>
            <person name="Saito J.A."/>
            <person name="Stott M.B."/>
            <person name="Li D."/>
            <person name="Zhao G."/>
            <person name="Wu J."/>
            <person name="Galperin M.Y."/>
            <person name="Koonin E.V."/>
            <person name="Makarova K.S."/>
            <person name="Wolf Y.I."/>
            <person name="Rigden D.J."/>
            <person name="Dunfield P.F."/>
            <person name="Wang L."/>
            <person name="Alam M."/>
        </authorList>
    </citation>
    <scope>NUCLEOTIDE SEQUENCE [LARGE SCALE GENOMIC DNA]</scope>
    <source>
        <strain>DSM 21510 / WK1</strain>
    </source>
</reference>
<protein>
    <recommendedName>
        <fullName evidence="2">Ornithine carbamoyltransferase</fullName>
        <shortName evidence="2">OTCase</shortName>
        <ecNumber evidence="2">2.1.3.3</ecNumber>
    </recommendedName>
</protein>
<feature type="chain" id="PRO_1000213564" description="Ornithine carbamoyltransferase">
    <location>
        <begin position="1"/>
        <end position="314"/>
    </location>
</feature>
<feature type="binding site" evidence="2">
    <location>
        <begin position="61"/>
        <end position="64"/>
    </location>
    <ligand>
        <name>carbamoyl phosphate</name>
        <dbReference type="ChEBI" id="CHEBI:58228"/>
    </ligand>
</feature>
<feature type="binding site" evidence="2">
    <location>
        <position position="88"/>
    </location>
    <ligand>
        <name>carbamoyl phosphate</name>
        <dbReference type="ChEBI" id="CHEBI:58228"/>
    </ligand>
</feature>
<feature type="binding site" evidence="2">
    <location>
        <position position="112"/>
    </location>
    <ligand>
        <name>carbamoyl phosphate</name>
        <dbReference type="ChEBI" id="CHEBI:58228"/>
    </ligand>
</feature>
<feature type="binding site" evidence="2">
    <location>
        <begin position="139"/>
        <end position="142"/>
    </location>
    <ligand>
        <name>carbamoyl phosphate</name>
        <dbReference type="ChEBI" id="CHEBI:58228"/>
    </ligand>
</feature>
<feature type="binding site" evidence="2">
    <location>
        <position position="170"/>
    </location>
    <ligand>
        <name>L-ornithine</name>
        <dbReference type="ChEBI" id="CHEBI:46911"/>
    </ligand>
</feature>
<feature type="binding site" evidence="2">
    <location>
        <position position="234"/>
    </location>
    <ligand>
        <name>L-ornithine</name>
        <dbReference type="ChEBI" id="CHEBI:46911"/>
    </ligand>
</feature>
<feature type="binding site" evidence="2">
    <location>
        <begin position="238"/>
        <end position="239"/>
    </location>
    <ligand>
        <name>L-ornithine</name>
        <dbReference type="ChEBI" id="CHEBI:46911"/>
    </ligand>
</feature>
<feature type="binding site" evidence="2">
    <location>
        <begin position="274"/>
        <end position="275"/>
    </location>
    <ligand>
        <name>carbamoyl phosphate</name>
        <dbReference type="ChEBI" id="CHEBI:58228"/>
    </ligand>
</feature>
<feature type="binding site" evidence="2">
    <location>
        <position position="302"/>
    </location>
    <ligand>
        <name>carbamoyl phosphate</name>
        <dbReference type="ChEBI" id="CHEBI:58228"/>
    </ligand>
</feature>
<gene>
    <name evidence="2" type="primary">argF</name>
    <name type="ordered locus">Aflv_2146</name>
</gene>
<organism>
    <name type="scientific">Anoxybacillus flavithermus (strain DSM 21510 / WK1)</name>
    <dbReference type="NCBI Taxonomy" id="491915"/>
    <lineage>
        <taxon>Bacteria</taxon>
        <taxon>Bacillati</taxon>
        <taxon>Bacillota</taxon>
        <taxon>Bacilli</taxon>
        <taxon>Bacillales</taxon>
        <taxon>Anoxybacillaceae</taxon>
        <taxon>Anoxybacillus</taxon>
    </lineage>
</organism>
<proteinExistence type="inferred from homology"/>
<keyword id="KW-0028">Amino-acid biosynthesis</keyword>
<keyword id="KW-0055">Arginine biosynthesis</keyword>
<keyword id="KW-0963">Cytoplasm</keyword>
<keyword id="KW-0808">Transferase</keyword>
<evidence type="ECO:0000250" key="1"/>
<evidence type="ECO:0000255" key="2">
    <source>
        <dbReference type="HAMAP-Rule" id="MF_01109"/>
    </source>
</evidence>
<comment type="function">
    <text evidence="1">Reversibly catalyzes the transfer of the carbamoyl group from carbamoyl phosphate (CP) to the N(epsilon) atom of ornithine (ORN) to produce L-citrulline.</text>
</comment>
<comment type="catalytic activity">
    <reaction evidence="2">
        <text>carbamoyl phosphate + L-ornithine = L-citrulline + phosphate + H(+)</text>
        <dbReference type="Rhea" id="RHEA:19513"/>
        <dbReference type="ChEBI" id="CHEBI:15378"/>
        <dbReference type="ChEBI" id="CHEBI:43474"/>
        <dbReference type="ChEBI" id="CHEBI:46911"/>
        <dbReference type="ChEBI" id="CHEBI:57743"/>
        <dbReference type="ChEBI" id="CHEBI:58228"/>
        <dbReference type="EC" id="2.1.3.3"/>
    </reaction>
</comment>
<comment type="pathway">
    <text evidence="2">Amino-acid biosynthesis; L-arginine biosynthesis; L-arginine from L-ornithine and carbamoyl phosphate: step 1/3.</text>
</comment>
<comment type="subcellular location">
    <subcellularLocation>
        <location evidence="2">Cytoplasm</location>
    </subcellularLocation>
</comment>
<comment type="similarity">
    <text evidence="2">Belongs to the aspartate/ornithine carbamoyltransferase superfamily. OTCase family.</text>
</comment>
<sequence length="314" mass="34642">MNMTATIQLKGKDFLTLADYSKEEIEYLLHLAVELKEKQQNGERYTPLSGKTLAMIFEKPSTRTRVSFEVGMVQLGGHALHLSSRDLQIGRGETIADTARVLSEYVDAIMIRTFEHEKVEELAHYATIPVINGLTDDDHPCQALADLLTIYEVKGKLQGLKLAYIGDGNNMAHALMLAAAKVGMHCAVASPKGYEPKEAVVKEAKQIANESGATIVVTNDPYEAIADADVVYTDVWASMGQEAEANERMHVFAPFQVNEALVQQAKQDFMFLHCLPAHRGEEVTEGVIDGVRSYIFQQAGNRLHAQKALLVSLL</sequence>
<name>OTC_ANOFW</name>